<protein>
    <recommendedName>
        <fullName evidence="1">ATP synthase epsilon chain</fullName>
    </recommendedName>
    <alternativeName>
        <fullName evidence="1">ATP synthase F1 sector epsilon subunit</fullName>
    </alternativeName>
    <alternativeName>
        <fullName evidence="1">F-ATPase epsilon subunit</fullName>
    </alternativeName>
</protein>
<accession>B9LZ83</accession>
<name>ATPE_GEODF</name>
<proteinExistence type="inferred from homology"/>
<dbReference type="EMBL" id="CP001390">
    <property type="protein sequence ID" value="ACM18815.1"/>
    <property type="molecule type" value="Genomic_DNA"/>
</dbReference>
<dbReference type="RefSeq" id="WP_012645544.1">
    <property type="nucleotide sequence ID" value="NC_011979.1"/>
</dbReference>
<dbReference type="SMR" id="B9LZ83"/>
<dbReference type="STRING" id="316067.Geob_0446"/>
<dbReference type="KEGG" id="geo:Geob_0446"/>
<dbReference type="eggNOG" id="COG0355">
    <property type="taxonomic scope" value="Bacteria"/>
</dbReference>
<dbReference type="HOGENOM" id="CLU_084338_1_3_7"/>
<dbReference type="OrthoDB" id="9799969at2"/>
<dbReference type="Proteomes" id="UP000007721">
    <property type="component" value="Chromosome"/>
</dbReference>
<dbReference type="GO" id="GO:0005886">
    <property type="term" value="C:plasma membrane"/>
    <property type="evidence" value="ECO:0007669"/>
    <property type="project" value="UniProtKB-SubCell"/>
</dbReference>
<dbReference type="GO" id="GO:0045259">
    <property type="term" value="C:proton-transporting ATP synthase complex"/>
    <property type="evidence" value="ECO:0007669"/>
    <property type="project" value="UniProtKB-KW"/>
</dbReference>
<dbReference type="GO" id="GO:0005524">
    <property type="term" value="F:ATP binding"/>
    <property type="evidence" value="ECO:0007669"/>
    <property type="project" value="UniProtKB-UniRule"/>
</dbReference>
<dbReference type="GO" id="GO:0046933">
    <property type="term" value="F:proton-transporting ATP synthase activity, rotational mechanism"/>
    <property type="evidence" value="ECO:0007669"/>
    <property type="project" value="UniProtKB-UniRule"/>
</dbReference>
<dbReference type="CDD" id="cd12152">
    <property type="entry name" value="F1-ATPase_delta"/>
    <property type="match status" value="1"/>
</dbReference>
<dbReference type="FunFam" id="2.60.15.10:FF:000001">
    <property type="entry name" value="ATP synthase epsilon chain"/>
    <property type="match status" value="1"/>
</dbReference>
<dbReference type="Gene3D" id="1.20.5.440">
    <property type="entry name" value="ATP synthase delta/epsilon subunit, C-terminal domain"/>
    <property type="match status" value="1"/>
</dbReference>
<dbReference type="Gene3D" id="2.60.15.10">
    <property type="entry name" value="F0F1 ATP synthase delta/epsilon subunit, N-terminal"/>
    <property type="match status" value="1"/>
</dbReference>
<dbReference type="HAMAP" id="MF_00530">
    <property type="entry name" value="ATP_synth_epsil_bac"/>
    <property type="match status" value="1"/>
</dbReference>
<dbReference type="InterPro" id="IPR001469">
    <property type="entry name" value="ATP_synth_F1_dsu/esu"/>
</dbReference>
<dbReference type="InterPro" id="IPR020546">
    <property type="entry name" value="ATP_synth_F1_dsu/esu_N"/>
</dbReference>
<dbReference type="InterPro" id="IPR020547">
    <property type="entry name" value="ATP_synth_F1_esu_C"/>
</dbReference>
<dbReference type="InterPro" id="IPR036771">
    <property type="entry name" value="ATPsynth_dsu/esu_N"/>
</dbReference>
<dbReference type="NCBIfam" id="TIGR01216">
    <property type="entry name" value="ATP_synt_epsi"/>
    <property type="match status" value="1"/>
</dbReference>
<dbReference type="NCBIfam" id="NF009980">
    <property type="entry name" value="PRK13446.1"/>
    <property type="match status" value="1"/>
</dbReference>
<dbReference type="PANTHER" id="PTHR13822">
    <property type="entry name" value="ATP SYNTHASE DELTA/EPSILON CHAIN"/>
    <property type="match status" value="1"/>
</dbReference>
<dbReference type="PANTHER" id="PTHR13822:SF10">
    <property type="entry name" value="ATP SYNTHASE EPSILON CHAIN, CHLOROPLASTIC"/>
    <property type="match status" value="1"/>
</dbReference>
<dbReference type="Pfam" id="PF00401">
    <property type="entry name" value="ATP-synt_DE"/>
    <property type="match status" value="1"/>
</dbReference>
<dbReference type="Pfam" id="PF02823">
    <property type="entry name" value="ATP-synt_DE_N"/>
    <property type="match status" value="1"/>
</dbReference>
<dbReference type="SUPFAM" id="SSF51344">
    <property type="entry name" value="Epsilon subunit of F1F0-ATP synthase N-terminal domain"/>
    <property type="match status" value="1"/>
</dbReference>
<gene>
    <name evidence="1" type="primary">atpC</name>
    <name type="ordered locus">Geob_0446</name>
</gene>
<feature type="chain" id="PRO_1000146331" description="ATP synthase epsilon chain">
    <location>
        <begin position="1"/>
        <end position="138"/>
    </location>
</feature>
<keyword id="KW-0066">ATP synthesis</keyword>
<keyword id="KW-0997">Cell inner membrane</keyword>
<keyword id="KW-1003">Cell membrane</keyword>
<keyword id="KW-0139">CF(1)</keyword>
<keyword id="KW-0375">Hydrogen ion transport</keyword>
<keyword id="KW-0406">Ion transport</keyword>
<keyword id="KW-0472">Membrane</keyword>
<keyword id="KW-1185">Reference proteome</keyword>
<keyword id="KW-0813">Transport</keyword>
<reference key="1">
    <citation type="submission" date="2009-01" db="EMBL/GenBank/DDBJ databases">
        <title>Complete sequence of Geobacter sp. FRC-32.</title>
        <authorList>
            <consortium name="US DOE Joint Genome Institute"/>
            <person name="Lucas S."/>
            <person name="Copeland A."/>
            <person name="Lapidus A."/>
            <person name="Glavina del Rio T."/>
            <person name="Dalin E."/>
            <person name="Tice H."/>
            <person name="Bruce D."/>
            <person name="Goodwin L."/>
            <person name="Pitluck S."/>
            <person name="Saunders E."/>
            <person name="Brettin T."/>
            <person name="Detter J.C."/>
            <person name="Han C."/>
            <person name="Larimer F."/>
            <person name="Land M."/>
            <person name="Hauser L."/>
            <person name="Kyrpides N."/>
            <person name="Ovchinnikova G."/>
            <person name="Kostka J."/>
            <person name="Richardson P."/>
        </authorList>
    </citation>
    <scope>NUCLEOTIDE SEQUENCE [LARGE SCALE GENOMIC DNA]</scope>
    <source>
        <strain>DSM 22248 / JCM 15807 / FRC-32</strain>
    </source>
</reference>
<organism>
    <name type="scientific">Geotalea daltonii (strain DSM 22248 / JCM 15807 / FRC-32)</name>
    <name type="common">Geobacter daltonii</name>
    <dbReference type="NCBI Taxonomy" id="316067"/>
    <lineage>
        <taxon>Bacteria</taxon>
        <taxon>Pseudomonadati</taxon>
        <taxon>Thermodesulfobacteriota</taxon>
        <taxon>Desulfuromonadia</taxon>
        <taxon>Geobacterales</taxon>
        <taxon>Geobacteraceae</taxon>
        <taxon>Geotalea</taxon>
    </lineage>
</organism>
<evidence type="ECO:0000255" key="1">
    <source>
        <dbReference type="HAMAP-Rule" id="MF_00530"/>
    </source>
</evidence>
<sequence length="138" mass="15258">MAEKLKVELVTPYKKVLTEEVDEITATGALGEFGVLPGHAPFLTSLKIGELSYKKDGVISHLALNWGYFEVENDKVTVLVETAEKADEIDLERAKSALGRAEEALKKLNPEDKSFRVYEAALERALIRVQVAGKSGRR</sequence>
<comment type="function">
    <text evidence="1">Produces ATP from ADP in the presence of a proton gradient across the membrane.</text>
</comment>
<comment type="subunit">
    <text evidence="1">F-type ATPases have 2 components, CF(1) - the catalytic core - and CF(0) - the membrane proton channel. CF(1) has five subunits: alpha(3), beta(3), gamma(1), delta(1), epsilon(1). CF(0) has three main subunits: a, b and c.</text>
</comment>
<comment type="subcellular location">
    <subcellularLocation>
        <location evidence="1">Cell inner membrane</location>
        <topology evidence="1">Peripheral membrane protein</topology>
    </subcellularLocation>
</comment>
<comment type="similarity">
    <text evidence="1">Belongs to the ATPase epsilon chain family.</text>
</comment>